<sequence>MFNSTALVIFAILFLLISADAFPIPSPNGEIDAMLIRNSIIGEDEDLMPTEISRRVLMAQKRYIGYETLRRDMVPCQKPGASYYDCRSGQANSYSRGCDTITRCARDTNDINT</sequence>
<name>RLF31_ARATH</name>
<feature type="signal peptide" evidence="2">
    <location>
        <begin position="1"/>
        <end position="21"/>
    </location>
</feature>
<feature type="propeptide" id="PRO_0000420329" description="Removed in mature form" evidence="1">
    <location>
        <begin position="22"/>
        <end position="58"/>
    </location>
</feature>
<feature type="chain" id="PRO_0000420330" description="Protein RALF-like 31">
    <location>
        <begin position="59"/>
        <end position="113"/>
    </location>
</feature>
<feature type="site" description="Required for proteolytic cleavage" evidence="1">
    <location>
        <begin position="54"/>
        <end position="55"/>
    </location>
</feature>
<feature type="disulfide bond" evidence="1">
    <location>
        <begin position="76"/>
        <end position="86"/>
    </location>
</feature>
<feature type="disulfide bond" evidence="1">
    <location>
        <begin position="98"/>
        <end position="104"/>
    </location>
</feature>
<feature type="sequence conflict" description="In Ref. 5; AAM62990." evidence="3" ref="5">
    <original>L</original>
    <variation>S</variation>
    <location>
        <position position="16"/>
    </location>
</feature>
<feature type="sequence conflict" description="In Ref. 5; AAM62990." evidence="3" ref="5">
    <original>A</original>
    <variation>V</variation>
    <location>
        <position position="21"/>
    </location>
</feature>
<proteinExistence type="inferred from homology"/>
<evidence type="ECO:0000250" key="1"/>
<evidence type="ECO:0000255" key="2"/>
<evidence type="ECO:0000305" key="3"/>
<protein>
    <recommendedName>
        <fullName>Protein RALF-like 31</fullName>
    </recommendedName>
</protein>
<comment type="function">
    <text evidence="1">Cell signaling peptide that may regulate plant stress, growth, and development. Mediates a rapid alkalinization of extracellular space by mediating a transient increase in the cytoplasmic Ca(2+) concentration leading to a calcium-dependent signaling events through a cell surface receptor and a concomitant activation of some intracellular mitogen-activated protein kinases (By similarity).</text>
</comment>
<comment type="subcellular location">
    <subcellularLocation>
        <location evidence="1">Secreted</location>
    </subcellularLocation>
</comment>
<comment type="PTM">
    <text evidence="1">Proteolytically cleaved, probably by S1P, a subtilisin-like serine protease (subtilase).</text>
</comment>
<comment type="similarity">
    <text evidence="3">Belongs to the plant rapid alkalinization factor (RALF) family.</text>
</comment>
<comment type="sequence caution" evidence="3">
    <conflict type="erroneous gene model prediction">
        <sequence resource="EMBL-CDS" id="CAB10174"/>
    </conflict>
</comment>
<comment type="sequence caution" evidence="3">
    <conflict type="erroneous gene model prediction">
        <sequence resource="EMBL-CDS" id="CAB78437"/>
    </conflict>
</comment>
<gene>
    <name type="primary">RALFL31</name>
    <name type="ordered locus">At4g13950</name>
    <name type="ORF">dl3015c</name>
    <name type="ORF">FCAALL.121</name>
</gene>
<accession>Q2HIM9</accession>
<accession>O23256</accession>
<accession>Q8LDV7</accession>
<keyword id="KW-1015">Disulfide bond</keyword>
<keyword id="KW-0372">Hormone</keyword>
<keyword id="KW-1185">Reference proteome</keyword>
<keyword id="KW-0964">Secreted</keyword>
<keyword id="KW-0732">Signal</keyword>
<organism>
    <name type="scientific">Arabidopsis thaliana</name>
    <name type="common">Mouse-ear cress</name>
    <dbReference type="NCBI Taxonomy" id="3702"/>
    <lineage>
        <taxon>Eukaryota</taxon>
        <taxon>Viridiplantae</taxon>
        <taxon>Streptophyta</taxon>
        <taxon>Embryophyta</taxon>
        <taxon>Tracheophyta</taxon>
        <taxon>Spermatophyta</taxon>
        <taxon>Magnoliopsida</taxon>
        <taxon>eudicotyledons</taxon>
        <taxon>Gunneridae</taxon>
        <taxon>Pentapetalae</taxon>
        <taxon>rosids</taxon>
        <taxon>malvids</taxon>
        <taxon>Brassicales</taxon>
        <taxon>Brassicaceae</taxon>
        <taxon>Camelineae</taxon>
        <taxon>Arabidopsis</taxon>
    </lineage>
</organism>
<dbReference type="EMBL" id="Z97335">
    <property type="protein sequence ID" value="CAB10174.1"/>
    <property type="status" value="ALT_SEQ"/>
    <property type="molecule type" value="Genomic_DNA"/>
</dbReference>
<dbReference type="EMBL" id="AL161537">
    <property type="protein sequence ID" value="CAB78437.1"/>
    <property type="status" value="ALT_SEQ"/>
    <property type="molecule type" value="Genomic_DNA"/>
</dbReference>
<dbReference type="EMBL" id="CP002687">
    <property type="protein sequence ID" value="AEE83349.1"/>
    <property type="molecule type" value="Genomic_DNA"/>
</dbReference>
<dbReference type="EMBL" id="BT024552">
    <property type="protein sequence ID" value="ABD38891.1"/>
    <property type="molecule type" value="mRNA"/>
</dbReference>
<dbReference type="EMBL" id="AY085773">
    <property type="protein sequence ID" value="AAM62990.1"/>
    <property type="molecule type" value="mRNA"/>
</dbReference>
<dbReference type="PIR" id="D71400">
    <property type="entry name" value="D71400"/>
</dbReference>
<dbReference type="RefSeq" id="NP_567413.1">
    <property type="nucleotide sequence ID" value="NM_117469.2"/>
</dbReference>
<dbReference type="SMR" id="Q2HIM9"/>
<dbReference type="FunCoup" id="Q2HIM9">
    <property type="interactions" value="21"/>
</dbReference>
<dbReference type="STRING" id="3702.Q2HIM9"/>
<dbReference type="iPTMnet" id="Q2HIM9"/>
<dbReference type="PaxDb" id="3702-AT4G13950.1"/>
<dbReference type="ProteomicsDB" id="228160"/>
<dbReference type="EnsemblPlants" id="AT4G13950.1">
    <property type="protein sequence ID" value="AT4G13950.1"/>
    <property type="gene ID" value="AT4G13950"/>
</dbReference>
<dbReference type="GeneID" id="827029"/>
<dbReference type="Gramene" id="AT4G13950.1">
    <property type="protein sequence ID" value="AT4G13950.1"/>
    <property type="gene ID" value="AT4G13950"/>
</dbReference>
<dbReference type="KEGG" id="ath:AT4G13950"/>
<dbReference type="Araport" id="AT4G13950"/>
<dbReference type="TAIR" id="AT4G13950">
    <property type="gene designation" value="RALFL31"/>
</dbReference>
<dbReference type="eggNOG" id="ENOG502S4CN">
    <property type="taxonomic scope" value="Eukaryota"/>
</dbReference>
<dbReference type="HOGENOM" id="CLU_127895_0_0_1"/>
<dbReference type="InParanoid" id="Q2HIM9"/>
<dbReference type="OMA" id="DTITRCA"/>
<dbReference type="PhylomeDB" id="Q2HIM9"/>
<dbReference type="PRO" id="PR:Q2HIM9"/>
<dbReference type="Proteomes" id="UP000006548">
    <property type="component" value="Chromosome 4"/>
</dbReference>
<dbReference type="ExpressionAtlas" id="Q2HIM9">
    <property type="expression patterns" value="baseline and differential"/>
</dbReference>
<dbReference type="GO" id="GO:0048046">
    <property type="term" value="C:apoplast"/>
    <property type="evidence" value="ECO:0000250"/>
    <property type="project" value="TAIR"/>
</dbReference>
<dbReference type="GO" id="GO:0005179">
    <property type="term" value="F:hormone activity"/>
    <property type="evidence" value="ECO:0000250"/>
    <property type="project" value="UniProtKB"/>
</dbReference>
<dbReference type="GO" id="GO:0019722">
    <property type="term" value="P:calcium-mediated signaling"/>
    <property type="evidence" value="ECO:0000250"/>
    <property type="project" value="UniProtKB"/>
</dbReference>
<dbReference type="GO" id="GO:0007267">
    <property type="term" value="P:cell-cell signaling"/>
    <property type="evidence" value="ECO:0000250"/>
    <property type="project" value="TAIR"/>
</dbReference>
<dbReference type="GO" id="GO:0040008">
    <property type="term" value="P:regulation of growth"/>
    <property type="evidence" value="ECO:0007669"/>
    <property type="project" value="UniProtKB-ARBA"/>
</dbReference>
<dbReference type="InterPro" id="IPR008801">
    <property type="entry name" value="RALF"/>
</dbReference>
<dbReference type="PANTHER" id="PTHR33136:SF36">
    <property type="entry name" value="PROTEIN RALF-LIKE 31"/>
    <property type="match status" value="1"/>
</dbReference>
<dbReference type="PANTHER" id="PTHR33136">
    <property type="entry name" value="RAPID ALKALINIZATION FACTOR-LIKE"/>
    <property type="match status" value="1"/>
</dbReference>
<dbReference type="Pfam" id="PF05498">
    <property type="entry name" value="RALF"/>
    <property type="match status" value="1"/>
</dbReference>
<reference key="1">
    <citation type="journal article" date="1998" name="Nature">
        <title>Analysis of 1.9 Mb of contiguous sequence from chromosome 4 of Arabidopsis thaliana.</title>
        <authorList>
            <person name="Bevan M."/>
            <person name="Bancroft I."/>
            <person name="Bent E."/>
            <person name="Love K."/>
            <person name="Goodman H.M."/>
            <person name="Dean C."/>
            <person name="Bergkamp R."/>
            <person name="Dirkse W."/>
            <person name="van Staveren M."/>
            <person name="Stiekema W."/>
            <person name="Drost L."/>
            <person name="Ridley P."/>
            <person name="Hudson S.-A."/>
            <person name="Patel K."/>
            <person name="Murphy G."/>
            <person name="Piffanelli P."/>
            <person name="Wedler H."/>
            <person name="Wedler E."/>
            <person name="Wambutt R."/>
            <person name="Weitzenegger T."/>
            <person name="Pohl T."/>
            <person name="Terryn N."/>
            <person name="Gielen J."/>
            <person name="Villarroel R."/>
            <person name="De Clercq R."/>
            <person name="van Montagu M."/>
            <person name="Lecharny A."/>
            <person name="Aubourg S."/>
            <person name="Gy I."/>
            <person name="Kreis M."/>
            <person name="Lao N."/>
            <person name="Kavanagh T."/>
            <person name="Hempel S."/>
            <person name="Kotter P."/>
            <person name="Entian K.-D."/>
            <person name="Rieger M."/>
            <person name="Schaefer M."/>
            <person name="Funk B."/>
            <person name="Mueller-Auer S."/>
            <person name="Silvey M."/>
            <person name="James R."/>
            <person name="Monfort A."/>
            <person name="Pons A."/>
            <person name="Puigdomenech P."/>
            <person name="Douka A."/>
            <person name="Voukelatou E."/>
            <person name="Milioni D."/>
            <person name="Hatzopoulos P."/>
            <person name="Piravandi E."/>
            <person name="Obermaier B."/>
            <person name="Hilbert H."/>
            <person name="Duesterhoeft A."/>
            <person name="Moores T."/>
            <person name="Jones J.D.G."/>
            <person name="Eneva T."/>
            <person name="Palme K."/>
            <person name="Benes V."/>
            <person name="Rechmann S."/>
            <person name="Ansorge W."/>
            <person name="Cooke R."/>
            <person name="Berger C."/>
            <person name="Delseny M."/>
            <person name="Voet M."/>
            <person name="Volckaert G."/>
            <person name="Mewes H.-W."/>
            <person name="Klosterman S."/>
            <person name="Schueller C."/>
            <person name="Chalwatzis N."/>
        </authorList>
    </citation>
    <scope>NUCLEOTIDE SEQUENCE [LARGE SCALE GENOMIC DNA]</scope>
    <source>
        <strain>cv. Columbia</strain>
    </source>
</reference>
<reference key="2">
    <citation type="journal article" date="1999" name="Nature">
        <title>Sequence and analysis of chromosome 4 of the plant Arabidopsis thaliana.</title>
        <authorList>
            <person name="Mayer K.F.X."/>
            <person name="Schueller C."/>
            <person name="Wambutt R."/>
            <person name="Murphy G."/>
            <person name="Volckaert G."/>
            <person name="Pohl T."/>
            <person name="Duesterhoeft A."/>
            <person name="Stiekema W."/>
            <person name="Entian K.-D."/>
            <person name="Terryn N."/>
            <person name="Harris B."/>
            <person name="Ansorge W."/>
            <person name="Brandt P."/>
            <person name="Grivell L.A."/>
            <person name="Rieger M."/>
            <person name="Weichselgartner M."/>
            <person name="de Simone V."/>
            <person name="Obermaier B."/>
            <person name="Mache R."/>
            <person name="Mueller M."/>
            <person name="Kreis M."/>
            <person name="Delseny M."/>
            <person name="Puigdomenech P."/>
            <person name="Watson M."/>
            <person name="Schmidtheini T."/>
            <person name="Reichert B."/>
            <person name="Portetelle D."/>
            <person name="Perez-Alonso M."/>
            <person name="Boutry M."/>
            <person name="Bancroft I."/>
            <person name="Vos P."/>
            <person name="Hoheisel J."/>
            <person name="Zimmermann W."/>
            <person name="Wedler H."/>
            <person name="Ridley P."/>
            <person name="Langham S.-A."/>
            <person name="McCullagh B."/>
            <person name="Bilham L."/>
            <person name="Robben J."/>
            <person name="van der Schueren J."/>
            <person name="Grymonprez B."/>
            <person name="Chuang Y.-J."/>
            <person name="Vandenbussche F."/>
            <person name="Braeken M."/>
            <person name="Weltjens I."/>
            <person name="Voet M."/>
            <person name="Bastiaens I."/>
            <person name="Aert R."/>
            <person name="Defoor E."/>
            <person name="Weitzenegger T."/>
            <person name="Bothe G."/>
            <person name="Ramsperger U."/>
            <person name="Hilbert H."/>
            <person name="Braun M."/>
            <person name="Holzer E."/>
            <person name="Brandt A."/>
            <person name="Peters S."/>
            <person name="van Staveren M."/>
            <person name="Dirkse W."/>
            <person name="Mooijman P."/>
            <person name="Klein Lankhorst R."/>
            <person name="Rose M."/>
            <person name="Hauf J."/>
            <person name="Koetter P."/>
            <person name="Berneiser S."/>
            <person name="Hempel S."/>
            <person name="Feldpausch M."/>
            <person name="Lamberth S."/>
            <person name="Van den Daele H."/>
            <person name="De Keyser A."/>
            <person name="Buysshaert C."/>
            <person name="Gielen J."/>
            <person name="Villarroel R."/>
            <person name="De Clercq R."/>
            <person name="van Montagu M."/>
            <person name="Rogers J."/>
            <person name="Cronin A."/>
            <person name="Quail M.A."/>
            <person name="Bray-Allen S."/>
            <person name="Clark L."/>
            <person name="Doggett J."/>
            <person name="Hall S."/>
            <person name="Kay M."/>
            <person name="Lennard N."/>
            <person name="McLay K."/>
            <person name="Mayes R."/>
            <person name="Pettett A."/>
            <person name="Rajandream M.A."/>
            <person name="Lyne M."/>
            <person name="Benes V."/>
            <person name="Rechmann S."/>
            <person name="Borkova D."/>
            <person name="Bloecker H."/>
            <person name="Scharfe M."/>
            <person name="Grimm M."/>
            <person name="Loehnert T.-H."/>
            <person name="Dose S."/>
            <person name="de Haan M."/>
            <person name="Maarse A.C."/>
            <person name="Schaefer M."/>
            <person name="Mueller-Auer S."/>
            <person name="Gabel C."/>
            <person name="Fuchs M."/>
            <person name="Fartmann B."/>
            <person name="Granderath K."/>
            <person name="Dauner D."/>
            <person name="Herzl A."/>
            <person name="Neumann S."/>
            <person name="Argiriou A."/>
            <person name="Vitale D."/>
            <person name="Liguori R."/>
            <person name="Piravandi E."/>
            <person name="Massenet O."/>
            <person name="Quigley F."/>
            <person name="Clabauld G."/>
            <person name="Muendlein A."/>
            <person name="Felber R."/>
            <person name="Schnabl S."/>
            <person name="Hiller R."/>
            <person name="Schmidt W."/>
            <person name="Lecharny A."/>
            <person name="Aubourg S."/>
            <person name="Chefdor F."/>
            <person name="Cooke R."/>
            <person name="Berger C."/>
            <person name="Monfort A."/>
            <person name="Casacuberta E."/>
            <person name="Gibbons T."/>
            <person name="Weber N."/>
            <person name="Vandenbol M."/>
            <person name="Bargues M."/>
            <person name="Terol J."/>
            <person name="Torres A."/>
            <person name="Perez-Perez A."/>
            <person name="Purnelle B."/>
            <person name="Bent E."/>
            <person name="Johnson S."/>
            <person name="Tacon D."/>
            <person name="Jesse T."/>
            <person name="Heijnen L."/>
            <person name="Schwarz S."/>
            <person name="Scholler P."/>
            <person name="Heber S."/>
            <person name="Francs P."/>
            <person name="Bielke C."/>
            <person name="Frishman D."/>
            <person name="Haase D."/>
            <person name="Lemcke K."/>
            <person name="Mewes H.-W."/>
            <person name="Stocker S."/>
            <person name="Zaccaria P."/>
            <person name="Bevan M."/>
            <person name="Wilson R.K."/>
            <person name="de la Bastide M."/>
            <person name="Habermann K."/>
            <person name="Parnell L."/>
            <person name="Dedhia N."/>
            <person name="Gnoj L."/>
            <person name="Schutz K."/>
            <person name="Huang E."/>
            <person name="Spiegel L."/>
            <person name="Sekhon M."/>
            <person name="Murray J."/>
            <person name="Sheet P."/>
            <person name="Cordes M."/>
            <person name="Abu-Threideh J."/>
            <person name="Stoneking T."/>
            <person name="Kalicki J."/>
            <person name="Graves T."/>
            <person name="Harmon G."/>
            <person name="Edwards J."/>
            <person name="Latreille P."/>
            <person name="Courtney L."/>
            <person name="Cloud J."/>
            <person name="Abbott A."/>
            <person name="Scott K."/>
            <person name="Johnson D."/>
            <person name="Minx P."/>
            <person name="Bentley D."/>
            <person name="Fulton B."/>
            <person name="Miller N."/>
            <person name="Greco T."/>
            <person name="Kemp K."/>
            <person name="Kramer J."/>
            <person name="Fulton L."/>
            <person name="Mardis E."/>
            <person name="Dante M."/>
            <person name="Pepin K."/>
            <person name="Hillier L.W."/>
            <person name="Nelson J."/>
            <person name="Spieth J."/>
            <person name="Ryan E."/>
            <person name="Andrews S."/>
            <person name="Geisel C."/>
            <person name="Layman D."/>
            <person name="Du H."/>
            <person name="Ali J."/>
            <person name="Berghoff A."/>
            <person name="Jones K."/>
            <person name="Drone K."/>
            <person name="Cotton M."/>
            <person name="Joshu C."/>
            <person name="Antonoiu B."/>
            <person name="Zidanic M."/>
            <person name="Strong C."/>
            <person name="Sun H."/>
            <person name="Lamar B."/>
            <person name="Yordan C."/>
            <person name="Ma P."/>
            <person name="Zhong J."/>
            <person name="Preston R."/>
            <person name="Vil D."/>
            <person name="Shekher M."/>
            <person name="Matero A."/>
            <person name="Shah R."/>
            <person name="Swaby I.K."/>
            <person name="O'Shaughnessy A."/>
            <person name="Rodriguez M."/>
            <person name="Hoffman J."/>
            <person name="Till S."/>
            <person name="Granat S."/>
            <person name="Shohdy N."/>
            <person name="Hasegawa A."/>
            <person name="Hameed A."/>
            <person name="Lodhi M."/>
            <person name="Johnson A."/>
            <person name="Chen E."/>
            <person name="Marra M.A."/>
            <person name="Martienssen R."/>
            <person name="McCombie W.R."/>
        </authorList>
    </citation>
    <scope>NUCLEOTIDE SEQUENCE [LARGE SCALE GENOMIC DNA]</scope>
    <source>
        <strain>cv. Columbia</strain>
    </source>
</reference>
<reference key="3">
    <citation type="journal article" date="2017" name="Plant J.">
        <title>Araport11: a complete reannotation of the Arabidopsis thaliana reference genome.</title>
        <authorList>
            <person name="Cheng C.Y."/>
            <person name="Krishnakumar V."/>
            <person name="Chan A.P."/>
            <person name="Thibaud-Nissen F."/>
            <person name="Schobel S."/>
            <person name="Town C.D."/>
        </authorList>
    </citation>
    <scope>GENOME REANNOTATION</scope>
    <source>
        <strain>cv. Columbia</strain>
    </source>
</reference>
<reference key="4">
    <citation type="submission" date="2006-02" db="EMBL/GenBank/DDBJ databases">
        <title>Arabidopsis ORF clones.</title>
        <authorList>
            <person name="Shinn P."/>
            <person name="Chen H."/>
            <person name="Kim C.J."/>
            <person name="Ecker J.R."/>
        </authorList>
    </citation>
    <scope>NUCLEOTIDE SEQUENCE [LARGE SCALE MRNA]</scope>
    <source>
        <strain>cv. Columbia</strain>
    </source>
</reference>
<reference key="5">
    <citation type="submission" date="2002-03" db="EMBL/GenBank/DDBJ databases">
        <title>Full-length cDNA from Arabidopsis thaliana.</title>
        <authorList>
            <person name="Brover V.V."/>
            <person name="Troukhan M.E."/>
            <person name="Alexandrov N.A."/>
            <person name="Lu Y.-P."/>
            <person name="Flavell R.B."/>
            <person name="Feldmann K.A."/>
        </authorList>
    </citation>
    <scope>NUCLEOTIDE SEQUENCE [LARGE SCALE MRNA]</scope>
</reference>
<reference key="6">
    <citation type="journal article" date="2002" name="In Silico Biol.">
        <title>Peptomics, identification of novel cationic Arabidopsis peptides with conserved sequence motifs.</title>
        <authorList>
            <person name="Olsen A.N."/>
            <person name="Mundy J."/>
            <person name="Skriver K."/>
        </authorList>
    </citation>
    <scope>GENE FAMILY</scope>
    <scope>NOMENCLATURE</scope>
</reference>